<organism>
    <name type="scientific">Yersinia pseudotuberculosis serotype IB (strain PB1/+)</name>
    <dbReference type="NCBI Taxonomy" id="502801"/>
    <lineage>
        <taxon>Bacteria</taxon>
        <taxon>Pseudomonadati</taxon>
        <taxon>Pseudomonadota</taxon>
        <taxon>Gammaproteobacteria</taxon>
        <taxon>Enterobacterales</taxon>
        <taxon>Yersiniaceae</taxon>
        <taxon>Yersinia</taxon>
    </lineage>
</organism>
<sequence>MGKGLALDIGGTKIAAAVVTESGMLIGRQQIATPRGGAGQLAAALETLIAPYRHQVDFIAVASTGIISGGRLTALNPANLGGLADFPLYDCIRSISDLPCVLLNDGQAAAWAEYQALGDKNDNMMFVTVSTGVGGGIILNKKLLVGQRGLAGHIGHTLSDPHGVLCGCGRRGCVESVASGTAIGAETLGWKQPVSAATVFDMAQQGDAQAGKVINRSAAAIAQMLADMKMALDLEVVILGGSVGLAVGYLERVVAAQKTLPGIYRVPVQEAHHRQDSGLLGAALWARTSL</sequence>
<reference key="1">
    <citation type="submission" date="2008-04" db="EMBL/GenBank/DDBJ databases">
        <title>Complete sequence of Yersinia pseudotuberculosis PB1/+.</title>
        <authorList>
            <person name="Copeland A."/>
            <person name="Lucas S."/>
            <person name="Lapidus A."/>
            <person name="Glavina del Rio T."/>
            <person name="Dalin E."/>
            <person name="Tice H."/>
            <person name="Bruce D."/>
            <person name="Goodwin L."/>
            <person name="Pitluck S."/>
            <person name="Munk A.C."/>
            <person name="Brettin T."/>
            <person name="Detter J.C."/>
            <person name="Han C."/>
            <person name="Tapia R."/>
            <person name="Schmutz J."/>
            <person name="Larimer F."/>
            <person name="Land M."/>
            <person name="Hauser L."/>
            <person name="Challacombe J.F."/>
            <person name="Green L."/>
            <person name="Lindler L.E."/>
            <person name="Nikolich M.P."/>
            <person name="Richardson P."/>
        </authorList>
    </citation>
    <scope>NUCLEOTIDE SEQUENCE [LARGE SCALE GENOMIC DNA]</scope>
    <source>
        <strain>PB1/+</strain>
    </source>
</reference>
<keyword id="KW-0067">ATP-binding</keyword>
<keyword id="KW-0119">Carbohydrate metabolism</keyword>
<keyword id="KW-0418">Kinase</keyword>
<keyword id="KW-0479">Metal-binding</keyword>
<keyword id="KW-0547">Nucleotide-binding</keyword>
<keyword id="KW-0808">Transferase</keyword>
<keyword id="KW-0862">Zinc</keyword>
<evidence type="ECO:0000255" key="1">
    <source>
        <dbReference type="HAMAP-Rule" id="MF_01234"/>
    </source>
</evidence>
<accession>B2K945</accession>
<proteinExistence type="inferred from homology"/>
<protein>
    <recommendedName>
        <fullName evidence="1">N-acetylmannosamine kinase</fullName>
        <ecNumber evidence="1">2.7.1.60</ecNumber>
    </recommendedName>
    <alternativeName>
        <fullName evidence="1">ManNAc kinase</fullName>
    </alternativeName>
    <alternativeName>
        <fullName evidence="1">N-acetyl-D-mannosamine kinase</fullName>
    </alternativeName>
</protein>
<dbReference type="EC" id="2.7.1.60" evidence="1"/>
<dbReference type="EMBL" id="CP001048">
    <property type="protein sequence ID" value="ACC89796.1"/>
    <property type="molecule type" value="Genomic_DNA"/>
</dbReference>
<dbReference type="RefSeq" id="WP_002208516.1">
    <property type="nucleotide sequence ID" value="NZ_CP009780.1"/>
</dbReference>
<dbReference type="SMR" id="B2K945"/>
<dbReference type="KEGG" id="ypb:YPTS_2839"/>
<dbReference type="PATRIC" id="fig|502801.10.peg.2266"/>
<dbReference type="UniPathway" id="UPA00629">
    <property type="reaction ID" value="UER00681"/>
</dbReference>
<dbReference type="GO" id="GO:0005524">
    <property type="term" value="F:ATP binding"/>
    <property type="evidence" value="ECO:0007669"/>
    <property type="project" value="UniProtKB-UniRule"/>
</dbReference>
<dbReference type="GO" id="GO:0009384">
    <property type="term" value="F:N-acylmannosamine kinase activity"/>
    <property type="evidence" value="ECO:0007669"/>
    <property type="project" value="UniProtKB-UniRule"/>
</dbReference>
<dbReference type="GO" id="GO:0008270">
    <property type="term" value="F:zinc ion binding"/>
    <property type="evidence" value="ECO:0007669"/>
    <property type="project" value="UniProtKB-UniRule"/>
</dbReference>
<dbReference type="GO" id="GO:0019262">
    <property type="term" value="P:N-acetylneuraminate catabolic process"/>
    <property type="evidence" value="ECO:0007669"/>
    <property type="project" value="UniProtKB-UniRule"/>
</dbReference>
<dbReference type="CDD" id="cd24069">
    <property type="entry name" value="ASKHA_NBD_ROK_EcNanK-like"/>
    <property type="match status" value="1"/>
</dbReference>
<dbReference type="FunFam" id="3.30.420.40:FF:000063">
    <property type="entry name" value="N-acetylmannosamine kinase"/>
    <property type="match status" value="1"/>
</dbReference>
<dbReference type="Gene3D" id="3.30.420.40">
    <property type="match status" value="2"/>
</dbReference>
<dbReference type="HAMAP" id="MF_01234">
    <property type="entry name" value="ManNAc_kinase"/>
    <property type="match status" value="1"/>
</dbReference>
<dbReference type="InterPro" id="IPR043129">
    <property type="entry name" value="ATPase_NBD"/>
</dbReference>
<dbReference type="InterPro" id="IPR023945">
    <property type="entry name" value="ManNAc_kinase_bac"/>
</dbReference>
<dbReference type="InterPro" id="IPR000600">
    <property type="entry name" value="ROK"/>
</dbReference>
<dbReference type="InterPro" id="IPR049874">
    <property type="entry name" value="ROK_cs"/>
</dbReference>
<dbReference type="NCBIfam" id="NF003461">
    <property type="entry name" value="PRK05082.1"/>
    <property type="match status" value="1"/>
</dbReference>
<dbReference type="PANTHER" id="PTHR18964:SF169">
    <property type="entry name" value="N-ACETYLMANNOSAMINE KINASE"/>
    <property type="match status" value="1"/>
</dbReference>
<dbReference type="PANTHER" id="PTHR18964">
    <property type="entry name" value="ROK (REPRESSOR, ORF, KINASE) FAMILY"/>
    <property type="match status" value="1"/>
</dbReference>
<dbReference type="Pfam" id="PF00480">
    <property type="entry name" value="ROK"/>
    <property type="match status" value="1"/>
</dbReference>
<dbReference type="SUPFAM" id="SSF53067">
    <property type="entry name" value="Actin-like ATPase domain"/>
    <property type="match status" value="1"/>
</dbReference>
<dbReference type="PROSITE" id="PS01125">
    <property type="entry name" value="ROK"/>
    <property type="match status" value="1"/>
</dbReference>
<gene>
    <name evidence="1" type="primary">nanK</name>
    <name type="ordered locus">YPTS_2839</name>
</gene>
<comment type="function">
    <text evidence="1">Catalyzes the phosphorylation of N-acetylmannosamine (ManNAc) to ManNAc-6-P.</text>
</comment>
<comment type="catalytic activity">
    <reaction evidence="1">
        <text>an N-acyl-D-mannosamine + ATP = an N-acyl-D-mannosamine 6-phosphate + ADP + H(+)</text>
        <dbReference type="Rhea" id="RHEA:23832"/>
        <dbReference type="ChEBI" id="CHEBI:15378"/>
        <dbReference type="ChEBI" id="CHEBI:16062"/>
        <dbReference type="ChEBI" id="CHEBI:30616"/>
        <dbReference type="ChEBI" id="CHEBI:57666"/>
        <dbReference type="ChEBI" id="CHEBI:456216"/>
        <dbReference type="EC" id="2.7.1.60"/>
    </reaction>
</comment>
<comment type="pathway">
    <text evidence="1">Amino-sugar metabolism; N-acetylneuraminate degradation; D-fructose 6-phosphate from N-acetylneuraminate: step 2/5.</text>
</comment>
<comment type="subunit">
    <text evidence="1">Homodimer.</text>
</comment>
<comment type="similarity">
    <text evidence="1">Belongs to the ROK (NagC/XylR) family. NanK subfamily.</text>
</comment>
<feature type="chain" id="PRO_1000139697" description="N-acetylmannosamine kinase">
    <location>
        <begin position="1"/>
        <end position="290"/>
    </location>
</feature>
<feature type="binding site" evidence="1">
    <location>
        <begin position="6"/>
        <end position="13"/>
    </location>
    <ligand>
        <name>ATP</name>
        <dbReference type="ChEBI" id="CHEBI:30616"/>
    </ligand>
</feature>
<feature type="binding site" evidence="1">
    <location>
        <begin position="132"/>
        <end position="139"/>
    </location>
    <ligand>
        <name>ATP</name>
        <dbReference type="ChEBI" id="CHEBI:30616"/>
    </ligand>
</feature>
<feature type="binding site" evidence="1">
    <location>
        <position position="156"/>
    </location>
    <ligand>
        <name>Zn(2+)</name>
        <dbReference type="ChEBI" id="CHEBI:29105"/>
    </ligand>
</feature>
<feature type="binding site" evidence="1">
    <location>
        <position position="166"/>
    </location>
    <ligand>
        <name>Zn(2+)</name>
        <dbReference type="ChEBI" id="CHEBI:29105"/>
    </ligand>
</feature>
<feature type="binding site" evidence="1">
    <location>
        <position position="168"/>
    </location>
    <ligand>
        <name>Zn(2+)</name>
        <dbReference type="ChEBI" id="CHEBI:29105"/>
    </ligand>
</feature>
<feature type="binding site" evidence="1">
    <location>
        <position position="173"/>
    </location>
    <ligand>
        <name>Zn(2+)</name>
        <dbReference type="ChEBI" id="CHEBI:29105"/>
    </ligand>
</feature>
<name>NANK_YERPB</name>